<reference key="1">
    <citation type="journal article" date="1997" name="J. Bacteriol.">
        <title>Complete genome sequence of Methanobacterium thermoautotrophicum deltaH: functional analysis and comparative genomics.</title>
        <authorList>
            <person name="Smith D.R."/>
            <person name="Doucette-Stamm L.A."/>
            <person name="Deloughery C."/>
            <person name="Lee H.-M."/>
            <person name="Dubois J."/>
            <person name="Aldredge T."/>
            <person name="Bashirzadeh R."/>
            <person name="Blakely D."/>
            <person name="Cook R."/>
            <person name="Gilbert K."/>
            <person name="Harrison D."/>
            <person name="Hoang L."/>
            <person name="Keagle P."/>
            <person name="Lumm W."/>
            <person name="Pothier B."/>
            <person name="Qiu D."/>
            <person name="Spadafora R."/>
            <person name="Vicare R."/>
            <person name="Wang Y."/>
            <person name="Wierzbowski J."/>
            <person name="Gibson R."/>
            <person name="Jiwani N."/>
            <person name="Caruso A."/>
            <person name="Bush D."/>
            <person name="Safer H."/>
            <person name="Patwell D."/>
            <person name="Prabhakar S."/>
            <person name="McDougall S."/>
            <person name="Shimer G."/>
            <person name="Goyal A."/>
            <person name="Pietrovski S."/>
            <person name="Church G.M."/>
            <person name="Daniels C.J."/>
            <person name="Mao J.-I."/>
            <person name="Rice P."/>
            <person name="Noelling J."/>
            <person name="Reeve J.N."/>
        </authorList>
    </citation>
    <scope>NUCLEOTIDE SEQUENCE [LARGE SCALE GENOMIC DNA]</scope>
    <source>
        <strain>ATCC 29096 / DSM 1053 / JCM 10044 / NBRC 100330 / Delta H</strain>
    </source>
</reference>
<gene>
    <name evidence="1" type="primary">rpl18e</name>
    <name type="ordered locus">MTH_38</name>
</gene>
<sequence length="121" mass="13546">MVRKITKTNPNLIKLIRNLRKKSSQEGAAIWKDVARRLERPTRNRAAVNISKINRHSDEDETVLVPGKVLGSGNLDHRVQVVALSFSQTARDKIERAGGECLTLGKIVEENPAIKNIKIIE</sequence>
<feature type="chain" id="PRO_0000132794" description="Large ribosomal subunit protein eL18">
    <location>
        <begin position="1"/>
        <end position="121"/>
    </location>
</feature>
<protein>
    <recommendedName>
        <fullName evidence="1">Large ribosomal subunit protein eL18</fullName>
    </recommendedName>
    <alternativeName>
        <fullName evidence="2">50S ribosomal protein L18e</fullName>
    </alternativeName>
</protein>
<dbReference type="EMBL" id="AE000666">
    <property type="protein sequence ID" value="AAB84546.1"/>
    <property type="molecule type" value="Genomic_DNA"/>
</dbReference>
<dbReference type="PIR" id="B69149">
    <property type="entry name" value="B69149"/>
</dbReference>
<dbReference type="RefSeq" id="WP_010875679.1">
    <property type="nucleotide sequence ID" value="NC_000916.1"/>
</dbReference>
<dbReference type="SMR" id="O26145"/>
<dbReference type="FunCoup" id="O26145">
    <property type="interactions" value="137"/>
</dbReference>
<dbReference type="STRING" id="187420.MTH_38"/>
<dbReference type="PaxDb" id="187420-MTH_38"/>
<dbReference type="EnsemblBacteria" id="AAB84546">
    <property type="protein sequence ID" value="AAB84546"/>
    <property type="gene ID" value="MTH_38"/>
</dbReference>
<dbReference type="KEGG" id="mth:MTH_38"/>
<dbReference type="PATRIC" id="fig|187420.15.peg.37"/>
<dbReference type="HOGENOM" id="CLU_146465_0_0_2"/>
<dbReference type="InParanoid" id="O26145"/>
<dbReference type="Proteomes" id="UP000005223">
    <property type="component" value="Chromosome"/>
</dbReference>
<dbReference type="GO" id="GO:0022625">
    <property type="term" value="C:cytosolic large ribosomal subunit"/>
    <property type="evidence" value="ECO:0007669"/>
    <property type="project" value="TreeGrafter"/>
</dbReference>
<dbReference type="GO" id="GO:0003723">
    <property type="term" value="F:RNA binding"/>
    <property type="evidence" value="ECO:0007669"/>
    <property type="project" value="TreeGrafter"/>
</dbReference>
<dbReference type="GO" id="GO:0003735">
    <property type="term" value="F:structural constituent of ribosome"/>
    <property type="evidence" value="ECO:0007669"/>
    <property type="project" value="InterPro"/>
</dbReference>
<dbReference type="GO" id="GO:0006412">
    <property type="term" value="P:translation"/>
    <property type="evidence" value="ECO:0007669"/>
    <property type="project" value="UniProtKB-UniRule"/>
</dbReference>
<dbReference type="Gene3D" id="3.100.10.10">
    <property type="match status" value="1"/>
</dbReference>
<dbReference type="HAMAP" id="MF_00329">
    <property type="entry name" value="Ribosomal_eL18"/>
    <property type="match status" value="1"/>
</dbReference>
<dbReference type="InterPro" id="IPR000039">
    <property type="entry name" value="Ribosomal_eL18"/>
</dbReference>
<dbReference type="InterPro" id="IPR022947">
    <property type="entry name" value="Ribosomal_eL18_arc"/>
</dbReference>
<dbReference type="InterPro" id="IPR021131">
    <property type="entry name" value="Ribosomal_uL15/eL18"/>
</dbReference>
<dbReference type="InterPro" id="IPR036227">
    <property type="entry name" value="Ribosomal_uL15/eL18_sf"/>
</dbReference>
<dbReference type="InterPro" id="IPR001196">
    <property type="entry name" value="Ribosomal_uL15_CS"/>
</dbReference>
<dbReference type="NCBIfam" id="NF003079">
    <property type="entry name" value="PRK04005.1"/>
    <property type="match status" value="1"/>
</dbReference>
<dbReference type="PANTHER" id="PTHR10934">
    <property type="entry name" value="60S RIBOSOMAL PROTEIN L18"/>
    <property type="match status" value="1"/>
</dbReference>
<dbReference type="PANTHER" id="PTHR10934:SF2">
    <property type="entry name" value="LARGE RIBOSOMAL SUBUNIT PROTEIN EL18"/>
    <property type="match status" value="1"/>
</dbReference>
<dbReference type="Pfam" id="PF17135">
    <property type="entry name" value="Ribosomal_L18"/>
    <property type="match status" value="1"/>
</dbReference>
<dbReference type="SUPFAM" id="SSF52080">
    <property type="entry name" value="Ribosomal proteins L15p and L18e"/>
    <property type="match status" value="1"/>
</dbReference>
<organism>
    <name type="scientific">Methanothermobacter thermautotrophicus (strain ATCC 29096 / DSM 1053 / JCM 10044 / NBRC 100330 / Delta H)</name>
    <name type="common">Methanobacterium thermoautotrophicum</name>
    <dbReference type="NCBI Taxonomy" id="187420"/>
    <lineage>
        <taxon>Archaea</taxon>
        <taxon>Methanobacteriati</taxon>
        <taxon>Methanobacteriota</taxon>
        <taxon>Methanomada group</taxon>
        <taxon>Methanobacteria</taxon>
        <taxon>Methanobacteriales</taxon>
        <taxon>Methanobacteriaceae</taxon>
        <taxon>Methanothermobacter</taxon>
    </lineage>
</organism>
<proteinExistence type="inferred from homology"/>
<keyword id="KW-1185">Reference proteome</keyword>
<keyword id="KW-0687">Ribonucleoprotein</keyword>
<keyword id="KW-0689">Ribosomal protein</keyword>
<accession>O26145</accession>
<name>RL18E_METTH</name>
<comment type="similarity">
    <text evidence="1">Belongs to the eukaryotic ribosomal protein eL18 family.</text>
</comment>
<evidence type="ECO:0000255" key="1">
    <source>
        <dbReference type="HAMAP-Rule" id="MF_00329"/>
    </source>
</evidence>
<evidence type="ECO:0000305" key="2"/>